<accession>P39585</accession>
<keyword id="KW-1185">Reference proteome</keyword>
<sequence>MLDYIWLDDESPILQQVPVEYSSAALIFSPFIQMPEGWENAKRKNDYEHIYPNDNEIRGIGKAVSWKKVMSSCGFQTHAELALALMTSIGALRDEFAREDLAEVLHENINGDLYYPSEDHISNFHIPSLVKVLGANGSNRFYYAEPIVENRGVLDITEANLRTVLDEAATELVLTDEKMDFVFMSVYDSFINVFLAKDKNIHELVERMGWEAMICDESTYISWYR</sequence>
<gene>
    <name type="primary">ywbB</name>
    <name type="ordered locus">BSU38380</name>
    <name type="ORF">ipa-17d</name>
</gene>
<dbReference type="EMBL" id="X73124">
    <property type="protein sequence ID" value="CAA51573.1"/>
    <property type="molecule type" value="Genomic_DNA"/>
</dbReference>
<dbReference type="EMBL" id="AL009126">
    <property type="protein sequence ID" value="CAB15864.1"/>
    <property type="molecule type" value="Genomic_DNA"/>
</dbReference>
<dbReference type="PIR" id="S39672">
    <property type="entry name" value="S39672"/>
</dbReference>
<dbReference type="RefSeq" id="NP_391717.1">
    <property type="nucleotide sequence ID" value="NC_000964.3"/>
</dbReference>
<dbReference type="RefSeq" id="WP_003242887.1">
    <property type="nucleotide sequence ID" value="NZ_OZ025638.1"/>
</dbReference>
<dbReference type="FunCoup" id="P39585">
    <property type="interactions" value="77"/>
</dbReference>
<dbReference type="PaxDb" id="224308-BSU38380"/>
<dbReference type="EnsemblBacteria" id="CAB15864">
    <property type="protein sequence ID" value="CAB15864"/>
    <property type="gene ID" value="BSU_38380"/>
</dbReference>
<dbReference type="GeneID" id="937330"/>
<dbReference type="KEGG" id="bsu:BSU38380"/>
<dbReference type="PATRIC" id="fig|224308.179.peg.4154"/>
<dbReference type="eggNOG" id="ENOG502ZX6E">
    <property type="taxonomic scope" value="Bacteria"/>
</dbReference>
<dbReference type="InParanoid" id="P39585"/>
<dbReference type="OrthoDB" id="2924040at2"/>
<dbReference type="BioCyc" id="BSUB:BSU38380-MONOMER"/>
<dbReference type="Proteomes" id="UP000001570">
    <property type="component" value="Chromosome"/>
</dbReference>
<dbReference type="InterPro" id="IPR024250">
    <property type="entry name" value="DUF2711"/>
</dbReference>
<dbReference type="Pfam" id="PF10924">
    <property type="entry name" value="DUF2711"/>
    <property type="match status" value="1"/>
</dbReference>
<feature type="chain" id="PRO_0000049951" description="Uncharacterized protein YwbB">
    <location>
        <begin position="1"/>
        <end position="225"/>
    </location>
</feature>
<reference key="1">
    <citation type="journal article" date="1993" name="Mol. Microbiol.">
        <title>Bacillus subtilis genome project: cloning and sequencing of the 97 kb region from 325 degrees to 333 degrees.</title>
        <authorList>
            <person name="Glaser P."/>
            <person name="Kunst F."/>
            <person name="Arnaud M."/>
            <person name="Coudart M.P."/>
            <person name="Gonzales W."/>
            <person name="Hullo M.-F."/>
            <person name="Ionescu M."/>
            <person name="Lubochinsky B."/>
            <person name="Marcelino L."/>
            <person name="Moszer I."/>
            <person name="Presecan E."/>
            <person name="Santana M."/>
            <person name="Schneider E."/>
            <person name="Schweizer J."/>
            <person name="Vertes A."/>
            <person name="Rapoport G."/>
            <person name="Danchin A."/>
        </authorList>
    </citation>
    <scope>NUCLEOTIDE SEQUENCE [GENOMIC DNA]</scope>
    <source>
        <strain>168</strain>
    </source>
</reference>
<reference key="2">
    <citation type="journal article" date="1997" name="Nature">
        <title>The complete genome sequence of the Gram-positive bacterium Bacillus subtilis.</title>
        <authorList>
            <person name="Kunst F."/>
            <person name="Ogasawara N."/>
            <person name="Moszer I."/>
            <person name="Albertini A.M."/>
            <person name="Alloni G."/>
            <person name="Azevedo V."/>
            <person name="Bertero M.G."/>
            <person name="Bessieres P."/>
            <person name="Bolotin A."/>
            <person name="Borchert S."/>
            <person name="Borriss R."/>
            <person name="Boursier L."/>
            <person name="Brans A."/>
            <person name="Braun M."/>
            <person name="Brignell S.C."/>
            <person name="Bron S."/>
            <person name="Brouillet S."/>
            <person name="Bruschi C.V."/>
            <person name="Caldwell B."/>
            <person name="Capuano V."/>
            <person name="Carter N.M."/>
            <person name="Choi S.-K."/>
            <person name="Codani J.-J."/>
            <person name="Connerton I.F."/>
            <person name="Cummings N.J."/>
            <person name="Daniel R.A."/>
            <person name="Denizot F."/>
            <person name="Devine K.M."/>
            <person name="Duesterhoeft A."/>
            <person name="Ehrlich S.D."/>
            <person name="Emmerson P.T."/>
            <person name="Entian K.-D."/>
            <person name="Errington J."/>
            <person name="Fabret C."/>
            <person name="Ferrari E."/>
            <person name="Foulger D."/>
            <person name="Fritz C."/>
            <person name="Fujita M."/>
            <person name="Fujita Y."/>
            <person name="Fuma S."/>
            <person name="Galizzi A."/>
            <person name="Galleron N."/>
            <person name="Ghim S.-Y."/>
            <person name="Glaser P."/>
            <person name="Goffeau A."/>
            <person name="Golightly E.J."/>
            <person name="Grandi G."/>
            <person name="Guiseppi G."/>
            <person name="Guy B.J."/>
            <person name="Haga K."/>
            <person name="Haiech J."/>
            <person name="Harwood C.R."/>
            <person name="Henaut A."/>
            <person name="Hilbert H."/>
            <person name="Holsappel S."/>
            <person name="Hosono S."/>
            <person name="Hullo M.-F."/>
            <person name="Itaya M."/>
            <person name="Jones L.-M."/>
            <person name="Joris B."/>
            <person name="Karamata D."/>
            <person name="Kasahara Y."/>
            <person name="Klaerr-Blanchard M."/>
            <person name="Klein C."/>
            <person name="Kobayashi Y."/>
            <person name="Koetter P."/>
            <person name="Koningstein G."/>
            <person name="Krogh S."/>
            <person name="Kumano M."/>
            <person name="Kurita K."/>
            <person name="Lapidus A."/>
            <person name="Lardinois S."/>
            <person name="Lauber J."/>
            <person name="Lazarevic V."/>
            <person name="Lee S.-M."/>
            <person name="Levine A."/>
            <person name="Liu H."/>
            <person name="Masuda S."/>
            <person name="Mauel C."/>
            <person name="Medigue C."/>
            <person name="Medina N."/>
            <person name="Mellado R.P."/>
            <person name="Mizuno M."/>
            <person name="Moestl D."/>
            <person name="Nakai S."/>
            <person name="Noback M."/>
            <person name="Noone D."/>
            <person name="O'Reilly M."/>
            <person name="Ogawa K."/>
            <person name="Ogiwara A."/>
            <person name="Oudega B."/>
            <person name="Park S.-H."/>
            <person name="Parro V."/>
            <person name="Pohl T.M."/>
            <person name="Portetelle D."/>
            <person name="Porwollik S."/>
            <person name="Prescott A.M."/>
            <person name="Presecan E."/>
            <person name="Pujic P."/>
            <person name="Purnelle B."/>
            <person name="Rapoport G."/>
            <person name="Rey M."/>
            <person name="Reynolds S."/>
            <person name="Rieger M."/>
            <person name="Rivolta C."/>
            <person name="Rocha E."/>
            <person name="Roche B."/>
            <person name="Rose M."/>
            <person name="Sadaie Y."/>
            <person name="Sato T."/>
            <person name="Scanlan E."/>
            <person name="Schleich S."/>
            <person name="Schroeter R."/>
            <person name="Scoffone F."/>
            <person name="Sekiguchi J."/>
            <person name="Sekowska A."/>
            <person name="Seror S.J."/>
            <person name="Serror P."/>
            <person name="Shin B.-S."/>
            <person name="Soldo B."/>
            <person name="Sorokin A."/>
            <person name="Tacconi E."/>
            <person name="Takagi T."/>
            <person name="Takahashi H."/>
            <person name="Takemaru K."/>
            <person name="Takeuchi M."/>
            <person name="Tamakoshi A."/>
            <person name="Tanaka T."/>
            <person name="Terpstra P."/>
            <person name="Tognoni A."/>
            <person name="Tosato V."/>
            <person name="Uchiyama S."/>
            <person name="Vandenbol M."/>
            <person name="Vannier F."/>
            <person name="Vassarotti A."/>
            <person name="Viari A."/>
            <person name="Wambutt R."/>
            <person name="Wedler E."/>
            <person name="Wedler H."/>
            <person name="Weitzenegger T."/>
            <person name="Winters P."/>
            <person name="Wipat A."/>
            <person name="Yamamoto H."/>
            <person name="Yamane K."/>
            <person name="Yasumoto K."/>
            <person name="Yata K."/>
            <person name="Yoshida K."/>
            <person name="Yoshikawa H.-F."/>
            <person name="Zumstein E."/>
            <person name="Yoshikawa H."/>
            <person name="Danchin A."/>
        </authorList>
    </citation>
    <scope>NUCLEOTIDE SEQUENCE [LARGE SCALE GENOMIC DNA]</scope>
    <source>
        <strain>168</strain>
    </source>
</reference>
<name>YWBB_BACSU</name>
<proteinExistence type="predicted"/>
<protein>
    <recommendedName>
        <fullName>Uncharacterized protein YwbB</fullName>
    </recommendedName>
</protein>
<organism>
    <name type="scientific">Bacillus subtilis (strain 168)</name>
    <dbReference type="NCBI Taxonomy" id="224308"/>
    <lineage>
        <taxon>Bacteria</taxon>
        <taxon>Bacillati</taxon>
        <taxon>Bacillota</taxon>
        <taxon>Bacilli</taxon>
        <taxon>Bacillales</taxon>
        <taxon>Bacillaceae</taxon>
        <taxon>Bacillus</taxon>
    </lineage>
</organism>